<gene>
    <name evidence="5" type="primary">LTPG27</name>
    <name evidence="7" type="ordered locus">At4g22630</name>
    <name evidence="8" type="ORF">T12H17.20</name>
</gene>
<sequence length="162" mass="17730">MAYTNKVAVAVGAAVVFLAVVMNPRWTEAQTYPKLDRLCVMMIPDILEECFTHDRLKPTEDCCNDLKNATMTQVDCLCDNFLESLSFSDLSRTFSAGVLKKCDVSHKYMCQAAKNRGEAKGGRNSTTTCDNSITNTSVGGKNKVATSMSAFGLVAILLFVMF</sequence>
<evidence type="ECO:0000250" key="1">
    <source>
        <dbReference type="UniProtKB" id="A0A0B4JDK1"/>
    </source>
</evidence>
<evidence type="ECO:0000250" key="2">
    <source>
        <dbReference type="UniProtKB" id="Q9C7F7"/>
    </source>
</evidence>
<evidence type="ECO:0000255" key="3"/>
<evidence type="ECO:0000255" key="4">
    <source>
        <dbReference type="PROSITE-ProRule" id="PRU00498"/>
    </source>
</evidence>
<evidence type="ECO:0000303" key="5">
    <source>
    </source>
</evidence>
<evidence type="ECO:0000305" key="6"/>
<evidence type="ECO:0000312" key="7">
    <source>
        <dbReference type="Araport" id="AT4G22630"/>
    </source>
</evidence>
<evidence type="ECO:0000312" key="8">
    <source>
        <dbReference type="EMBL" id="CAA16548.1"/>
    </source>
</evidence>
<keyword id="KW-1003">Cell membrane</keyword>
<keyword id="KW-1015">Disulfide bond</keyword>
<keyword id="KW-0325">Glycoprotein</keyword>
<keyword id="KW-0336">GPI-anchor</keyword>
<keyword id="KW-0449">Lipoprotein</keyword>
<keyword id="KW-0472">Membrane</keyword>
<keyword id="KW-1185">Reference proteome</keyword>
<keyword id="KW-0732">Signal</keyword>
<accession>O49644</accession>
<comment type="function">
    <text evidence="2">Probable lipid transfer protein.</text>
</comment>
<comment type="subcellular location">
    <subcellularLocation>
        <location evidence="3">Cell membrane</location>
        <topology evidence="3">Lipid-anchor</topology>
        <topology evidence="3">GPI-anchor</topology>
    </subcellularLocation>
</comment>
<comment type="similarity">
    <text evidence="6">Belongs to the plant LTP family.</text>
</comment>
<organism>
    <name type="scientific">Arabidopsis thaliana</name>
    <name type="common">Mouse-ear cress</name>
    <dbReference type="NCBI Taxonomy" id="3702"/>
    <lineage>
        <taxon>Eukaryota</taxon>
        <taxon>Viridiplantae</taxon>
        <taxon>Streptophyta</taxon>
        <taxon>Embryophyta</taxon>
        <taxon>Tracheophyta</taxon>
        <taxon>Spermatophyta</taxon>
        <taxon>Magnoliopsida</taxon>
        <taxon>eudicotyledons</taxon>
        <taxon>Gunneridae</taxon>
        <taxon>Pentapetalae</taxon>
        <taxon>rosids</taxon>
        <taxon>malvids</taxon>
        <taxon>Brassicales</taxon>
        <taxon>Brassicaceae</taxon>
        <taxon>Camelineae</taxon>
        <taxon>Arabidopsis</taxon>
    </lineage>
</organism>
<dbReference type="EMBL" id="AL021635">
    <property type="protein sequence ID" value="CAA16548.1"/>
    <property type="molecule type" value="Genomic_DNA"/>
</dbReference>
<dbReference type="EMBL" id="AL033545">
    <property type="protein sequence ID" value="CAA22168.1"/>
    <property type="molecule type" value="Genomic_DNA"/>
</dbReference>
<dbReference type="EMBL" id="AL161557">
    <property type="protein sequence ID" value="CAB79218.1"/>
    <property type="molecule type" value="Genomic_DNA"/>
</dbReference>
<dbReference type="EMBL" id="CP002687">
    <property type="protein sequence ID" value="AEE84632.1"/>
    <property type="molecule type" value="Genomic_DNA"/>
</dbReference>
<dbReference type="EMBL" id="CP002687">
    <property type="protein sequence ID" value="ANM67991.1"/>
    <property type="molecule type" value="Genomic_DNA"/>
</dbReference>
<dbReference type="PIR" id="T04558">
    <property type="entry name" value="T04558"/>
</dbReference>
<dbReference type="RefSeq" id="NP_001320034.1">
    <property type="nucleotide sequence ID" value="NM_001341555.1"/>
</dbReference>
<dbReference type="RefSeq" id="NP_001329779.1">
    <property type="nucleotide sequence ID" value="NM_001341556.1"/>
</dbReference>
<dbReference type="GlyCosmos" id="O49644">
    <property type="glycosylation" value="3 sites, No reported glycans"/>
</dbReference>
<dbReference type="GlyGen" id="O49644">
    <property type="glycosylation" value="3 sites"/>
</dbReference>
<dbReference type="PaxDb" id="3702-AT4G22630.1"/>
<dbReference type="EnsemblPlants" id="AT4G22630.1">
    <property type="protein sequence ID" value="AT4G22630.1"/>
    <property type="gene ID" value="AT4G22630"/>
</dbReference>
<dbReference type="EnsemblPlants" id="AT4G22630.2">
    <property type="protein sequence ID" value="AT4G22630.2"/>
    <property type="gene ID" value="AT4G22630"/>
</dbReference>
<dbReference type="GeneID" id="828359"/>
<dbReference type="Gramene" id="AT4G22630.1">
    <property type="protein sequence ID" value="AT4G22630.1"/>
    <property type="gene ID" value="AT4G22630"/>
</dbReference>
<dbReference type="Gramene" id="AT4G22630.2">
    <property type="protein sequence ID" value="AT4G22630.2"/>
    <property type="gene ID" value="AT4G22630"/>
</dbReference>
<dbReference type="KEGG" id="ath:AT4G22630"/>
<dbReference type="Araport" id="AT4G22630"/>
<dbReference type="TAIR" id="AT4G22630">
    <property type="gene designation" value="LTPG27"/>
</dbReference>
<dbReference type="HOGENOM" id="CLU_138794_0_0_1"/>
<dbReference type="InParanoid" id="O49644"/>
<dbReference type="PhylomeDB" id="O49644"/>
<dbReference type="PRO" id="PR:O49644"/>
<dbReference type="Proteomes" id="UP000006548">
    <property type="component" value="Chromosome 4"/>
</dbReference>
<dbReference type="ExpressionAtlas" id="O49644">
    <property type="expression patterns" value="baseline and differential"/>
</dbReference>
<dbReference type="GO" id="GO:0005886">
    <property type="term" value="C:plasma membrane"/>
    <property type="evidence" value="ECO:0007669"/>
    <property type="project" value="UniProtKB-SubCell"/>
</dbReference>
<dbReference type="GO" id="GO:0098552">
    <property type="term" value="C:side of membrane"/>
    <property type="evidence" value="ECO:0007669"/>
    <property type="project" value="UniProtKB-KW"/>
</dbReference>
<dbReference type="CDD" id="cd00010">
    <property type="entry name" value="AAI_LTSS"/>
    <property type="match status" value="1"/>
</dbReference>
<dbReference type="InterPro" id="IPR036312">
    <property type="entry name" value="Bifun_inhib/LTP/seed_sf"/>
</dbReference>
<dbReference type="InterPro" id="IPR016140">
    <property type="entry name" value="Bifunc_inhib/LTP/seed_store"/>
</dbReference>
<dbReference type="Pfam" id="PF14368">
    <property type="entry name" value="LTP_2"/>
    <property type="match status" value="1"/>
</dbReference>
<dbReference type="SUPFAM" id="SSF47699">
    <property type="entry name" value="Bifunctional inhibitor/lipid-transfer protein/seed storage 2S albumin"/>
    <property type="match status" value="1"/>
</dbReference>
<feature type="signal peptide" evidence="3">
    <location>
        <begin position="1"/>
        <end position="29"/>
    </location>
</feature>
<feature type="chain" id="PRO_0000451658" description="Non-specific lipid transfer protein GPI-anchored 27">
    <location>
        <begin position="30"/>
        <end position="137"/>
    </location>
</feature>
<feature type="propeptide" id="PRO_0000451659" description="Removed in mature form" evidence="3">
    <location>
        <begin position="138"/>
        <end position="162"/>
    </location>
</feature>
<feature type="lipid moiety-binding region" description="GPI-anchor amidated serine" evidence="3">
    <location>
        <position position="137"/>
    </location>
</feature>
<feature type="glycosylation site" description="N-linked (GlcNAc...) asparagine" evidence="4">
    <location>
        <position position="68"/>
    </location>
</feature>
<feature type="glycosylation site" description="N-linked (GlcNAc...) asparagine" evidence="4">
    <location>
        <position position="124"/>
    </location>
</feature>
<feature type="glycosylation site" description="N-linked (GlcNAc...) asparagine" evidence="4">
    <location>
        <position position="135"/>
    </location>
</feature>
<feature type="disulfide bond" evidence="1">
    <location>
        <begin position="39"/>
        <end position="78"/>
    </location>
</feature>
<feature type="disulfide bond" evidence="1">
    <location>
        <begin position="50"/>
        <end position="62"/>
    </location>
</feature>
<feature type="disulfide bond" evidence="1">
    <location>
        <begin position="63"/>
        <end position="102"/>
    </location>
</feature>
<feature type="disulfide bond" evidence="1">
    <location>
        <begin position="76"/>
        <end position="110"/>
    </location>
</feature>
<name>LTG27_ARATH</name>
<protein>
    <recommendedName>
        <fullName evidence="5">Non-specific lipid transfer protein GPI-anchored 27</fullName>
        <shortName evidence="5">AtLTPG-27</shortName>
        <shortName evidence="5">Protein LTP-GPI-ANCHORED 27</shortName>
    </recommendedName>
</protein>
<reference key="1">
    <citation type="journal article" date="1999" name="Nature">
        <title>Sequence and analysis of chromosome 4 of the plant Arabidopsis thaliana.</title>
        <authorList>
            <person name="Mayer K.F.X."/>
            <person name="Schueller C."/>
            <person name="Wambutt R."/>
            <person name="Murphy G."/>
            <person name="Volckaert G."/>
            <person name="Pohl T."/>
            <person name="Duesterhoeft A."/>
            <person name="Stiekema W."/>
            <person name="Entian K.-D."/>
            <person name="Terryn N."/>
            <person name="Harris B."/>
            <person name="Ansorge W."/>
            <person name="Brandt P."/>
            <person name="Grivell L.A."/>
            <person name="Rieger M."/>
            <person name="Weichselgartner M."/>
            <person name="de Simone V."/>
            <person name="Obermaier B."/>
            <person name="Mache R."/>
            <person name="Mueller M."/>
            <person name="Kreis M."/>
            <person name="Delseny M."/>
            <person name="Puigdomenech P."/>
            <person name="Watson M."/>
            <person name="Schmidtheini T."/>
            <person name="Reichert B."/>
            <person name="Portetelle D."/>
            <person name="Perez-Alonso M."/>
            <person name="Boutry M."/>
            <person name="Bancroft I."/>
            <person name="Vos P."/>
            <person name="Hoheisel J."/>
            <person name="Zimmermann W."/>
            <person name="Wedler H."/>
            <person name="Ridley P."/>
            <person name="Langham S.-A."/>
            <person name="McCullagh B."/>
            <person name="Bilham L."/>
            <person name="Robben J."/>
            <person name="van der Schueren J."/>
            <person name="Grymonprez B."/>
            <person name="Chuang Y.-J."/>
            <person name="Vandenbussche F."/>
            <person name="Braeken M."/>
            <person name="Weltjens I."/>
            <person name="Voet M."/>
            <person name="Bastiaens I."/>
            <person name="Aert R."/>
            <person name="Defoor E."/>
            <person name="Weitzenegger T."/>
            <person name="Bothe G."/>
            <person name="Ramsperger U."/>
            <person name="Hilbert H."/>
            <person name="Braun M."/>
            <person name="Holzer E."/>
            <person name="Brandt A."/>
            <person name="Peters S."/>
            <person name="van Staveren M."/>
            <person name="Dirkse W."/>
            <person name="Mooijman P."/>
            <person name="Klein Lankhorst R."/>
            <person name="Rose M."/>
            <person name="Hauf J."/>
            <person name="Koetter P."/>
            <person name="Berneiser S."/>
            <person name="Hempel S."/>
            <person name="Feldpausch M."/>
            <person name="Lamberth S."/>
            <person name="Van den Daele H."/>
            <person name="De Keyser A."/>
            <person name="Buysshaert C."/>
            <person name="Gielen J."/>
            <person name="Villarroel R."/>
            <person name="De Clercq R."/>
            <person name="van Montagu M."/>
            <person name="Rogers J."/>
            <person name="Cronin A."/>
            <person name="Quail M.A."/>
            <person name="Bray-Allen S."/>
            <person name="Clark L."/>
            <person name="Doggett J."/>
            <person name="Hall S."/>
            <person name="Kay M."/>
            <person name="Lennard N."/>
            <person name="McLay K."/>
            <person name="Mayes R."/>
            <person name="Pettett A."/>
            <person name="Rajandream M.A."/>
            <person name="Lyne M."/>
            <person name="Benes V."/>
            <person name="Rechmann S."/>
            <person name="Borkova D."/>
            <person name="Bloecker H."/>
            <person name="Scharfe M."/>
            <person name="Grimm M."/>
            <person name="Loehnert T.-H."/>
            <person name="Dose S."/>
            <person name="de Haan M."/>
            <person name="Maarse A.C."/>
            <person name="Schaefer M."/>
            <person name="Mueller-Auer S."/>
            <person name="Gabel C."/>
            <person name="Fuchs M."/>
            <person name="Fartmann B."/>
            <person name="Granderath K."/>
            <person name="Dauner D."/>
            <person name="Herzl A."/>
            <person name="Neumann S."/>
            <person name="Argiriou A."/>
            <person name="Vitale D."/>
            <person name="Liguori R."/>
            <person name="Piravandi E."/>
            <person name="Massenet O."/>
            <person name="Quigley F."/>
            <person name="Clabauld G."/>
            <person name="Muendlein A."/>
            <person name="Felber R."/>
            <person name="Schnabl S."/>
            <person name="Hiller R."/>
            <person name="Schmidt W."/>
            <person name="Lecharny A."/>
            <person name="Aubourg S."/>
            <person name="Chefdor F."/>
            <person name="Cooke R."/>
            <person name="Berger C."/>
            <person name="Monfort A."/>
            <person name="Casacuberta E."/>
            <person name="Gibbons T."/>
            <person name="Weber N."/>
            <person name="Vandenbol M."/>
            <person name="Bargues M."/>
            <person name="Terol J."/>
            <person name="Torres A."/>
            <person name="Perez-Perez A."/>
            <person name="Purnelle B."/>
            <person name="Bent E."/>
            <person name="Johnson S."/>
            <person name="Tacon D."/>
            <person name="Jesse T."/>
            <person name="Heijnen L."/>
            <person name="Schwarz S."/>
            <person name="Scholler P."/>
            <person name="Heber S."/>
            <person name="Francs P."/>
            <person name="Bielke C."/>
            <person name="Frishman D."/>
            <person name="Haase D."/>
            <person name="Lemcke K."/>
            <person name="Mewes H.-W."/>
            <person name="Stocker S."/>
            <person name="Zaccaria P."/>
            <person name="Bevan M."/>
            <person name="Wilson R.K."/>
            <person name="de la Bastide M."/>
            <person name="Habermann K."/>
            <person name="Parnell L."/>
            <person name="Dedhia N."/>
            <person name="Gnoj L."/>
            <person name="Schutz K."/>
            <person name="Huang E."/>
            <person name="Spiegel L."/>
            <person name="Sekhon M."/>
            <person name="Murray J."/>
            <person name="Sheet P."/>
            <person name="Cordes M."/>
            <person name="Abu-Threideh J."/>
            <person name="Stoneking T."/>
            <person name="Kalicki J."/>
            <person name="Graves T."/>
            <person name="Harmon G."/>
            <person name="Edwards J."/>
            <person name="Latreille P."/>
            <person name="Courtney L."/>
            <person name="Cloud J."/>
            <person name="Abbott A."/>
            <person name="Scott K."/>
            <person name="Johnson D."/>
            <person name="Minx P."/>
            <person name="Bentley D."/>
            <person name="Fulton B."/>
            <person name="Miller N."/>
            <person name="Greco T."/>
            <person name="Kemp K."/>
            <person name="Kramer J."/>
            <person name="Fulton L."/>
            <person name="Mardis E."/>
            <person name="Dante M."/>
            <person name="Pepin K."/>
            <person name="Hillier L.W."/>
            <person name="Nelson J."/>
            <person name="Spieth J."/>
            <person name="Ryan E."/>
            <person name="Andrews S."/>
            <person name="Geisel C."/>
            <person name="Layman D."/>
            <person name="Du H."/>
            <person name="Ali J."/>
            <person name="Berghoff A."/>
            <person name="Jones K."/>
            <person name="Drone K."/>
            <person name="Cotton M."/>
            <person name="Joshu C."/>
            <person name="Antonoiu B."/>
            <person name="Zidanic M."/>
            <person name="Strong C."/>
            <person name="Sun H."/>
            <person name="Lamar B."/>
            <person name="Yordan C."/>
            <person name="Ma P."/>
            <person name="Zhong J."/>
            <person name="Preston R."/>
            <person name="Vil D."/>
            <person name="Shekher M."/>
            <person name="Matero A."/>
            <person name="Shah R."/>
            <person name="Swaby I.K."/>
            <person name="O'Shaughnessy A."/>
            <person name="Rodriguez M."/>
            <person name="Hoffman J."/>
            <person name="Till S."/>
            <person name="Granat S."/>
            <person name="Shohdy N."/>
            <person name="Hasegawa A."/>
            <person name="Hameed A."/>
            <person name="Lodhi M."/>
            <person name="Johnson A."/>
            <person name="Chen E."/>
            <person name="Marra M.A."/>
            <person name="Martienssen R."/>
            <person name="McCombie W.R."/>
        </authorList>
    </citation>
    <scope>NUCLEOTIDE SEQUENCE [LARGE SCALE GENOMIC DNA]</scope>
    <source>
        <strain>cv. Columbia</strain>
    </source>
</reference>
<reference key="2">
    <citation type="journal article" date="2017" name="Plant J.">
        <title>Araport11: a complete reannotation of the Arabidopsis thaliana reference genome.</title>
        <authorList>
            <person name="Cheng C.Y."/>
            <person name="Krishnakumar V."/>
            <person name="Chan A.P."/>
            <person name="Thibaud-Nissen F."/>
            <person name="Schobel S."/>
            <person name="Town C.D."/>
        </authorList>
    </citation>
    <scope>GENOME REANNOTATION</scope>
    <source>
        <strain>cv. Columbia</strain>
    </source>
</reference>
<reference key="3">
    <citation type="journal article" date="2013" name="Plant Mol. Biol.">
        <title>Coexpression patterns indicate that GPI-anchored non-specific lipid transfer proteins are involved in accumulation of cuticular wax, suberin and sporopollenin.</title>
        <authorList>
            <person name="Edstam M.M."/>
            <person name="Blomqvist K."/>
            <person name="Ekloef A."/>
            <person name="Wennergren U."/>
            <person name="Edqvist J."/>
        </authorList>
    </citation>
    <scope>GENE FAMILY</scope>
    <scope>NOMENCLATURE</scope>
    <source>
        <strain>cv. Columbia</strain>
    </source>
</reference>
<proteinExistence type="inferred from homology"/>